<comment type="function">
    <text evidence="1">This is one of the proteins that bind and probably mediate the attachment of the 5S RNA into the large ribosomal subunit, where it forms part of the central protuberance. In the 70S ribosome it contacts protein S13 of the 30S subunit (bridge B1b), connecting the 2 subunits; this bridge is implicated in subunit movement. Contacts the P site tRNA; the 5S rRNA and some of its associated proteins might help stabilize positioning of ribosome-bound tRNAs.</text>
</comment>
<comment type="subunit">
    <text evidence="1">Part of the 50S ribosomal subunit; part of the 5S rRNA/L5/L18/L25 subcomplex. Contacts the 5S rRNA and the P site tRNA. Forms a bridge to the 30S subunit in the 70S ribosome.</text>
</comment>
<comment type="similarity">
    <text evidence="1">Belongs to the universal ribosomal protein uL5 family.</text>
</comment>
<feature type="chain" id="PRO_1000052834" description="Large ribosomal subunit protein uL5">
    <location>
        <begin position="1"/>
        <end position="192"/>
    </location>
</feature>
<proteinExistence type="inferred from homology"/>
<evidence type="ECO:0000255" key="1">
    <source>
        <dbReference type="HAMAP-Rule" id="MF_01333"/>
    </source>
</evidence>
<evidence type="ECO:0000305" key="2"/>
<name>RL5_SPHAL</name>
<accession>Q1GPB1</accession>
<reference key="1">
    <citation type="journal article" date="2009" name="Proc. Natl. Acad. Sci. U.S.A.">
        <title>The genomic basis of trophic strategy in marine bacteria.</title>
        <authorList>
            <person name="Lauro F.M."/>
            <person name="McDougald D."/>
            <person name="Thomas T."/>
            <person name="Williams T.J."/>
            <person name="Egan S."/>
            <person name="Rice S."/>
            <person name="DeMaere M.Z."/>
            <person name="Ting L."/>
            <person name="Ertan H."/>
            <person name="Johnson J."/>
            <person name="Ferriera S."/>
            <person name="Lapidus A."/>
            <person name="Anderson I."/>
            <person name="Kyrpides N."/>
            <person name="Munk A.C."/>
            <person name="Detter C."/>
            <person name="Han C.S."/>
            <person name="Brown M.V."/>
            <person name="Robb F.T."/>
            <person name="Kjelleberg S."/>
            <person name="Cavicchioli R."/>
        </authorList>
    </citation>
    <scope>NUCLEOTIDE SEQUENCE [LARGE SCALE GENOMIC DNA]</scope>
    <source>
        <strain>DSM 13593 / LMG 18877 / RB2256</strain>
    </source>
</reference>
<sequence>MADNYTPRMKKLYDDKIVKAMTDKFGYKNAMEVPKIEKITLNMGVGEATQDKKKVEAAAAEMELIAGQKPVVTKAKKSIAQFKLREGMPIGCKVTLRRERMYEFLDRLITIAMPRIRDFRGVSAKSFDGRGNYAMGLKEQIIFPEINYDRIDQVRGMDVIVTTTARTDEEARELLRLFGFPFPIEAQEKEAA</sequence>
<gene>
    <name evidence="1" type="primary">rplE</name>
    <name type="ordered locus">Sala_2806</name>
</gene>
<dbReference type="EMBL" id="CP000356">
    <property type="protein sequence ID" value="ABF54511.1"/>
    <property type="molecule type" value="Genomic_DNA"/>
</dbReference>
<dbReference type="RefSeq" id="WP_011543076.1">
    <property type="nucleotide sequence ID" value="NC_008048.1"/>
</dbReference>
<dbReference type="SMR" id="Q1GPB1"/>
<dbReference type="STRING" id="317655.Sala_2806"/>
<dbReference type="KEGG" id="sal:Sala_2806"/>
<dbReference type="eggNOG" id="COG0094">
    <property type="taxonomic scope" value="Bacteria"/>
</dbReference>
<dbReference type="HOGENOM" id="CLU_061015_2_1_5"/>
<dbReference type="OrthoDB" id="9806626at2"/>
<dbReference type="Proteomes" id="UP000006578">
    <property type="component" value="Chromosome"/>
</dbReference>
<dbReference type="GO" id="GO:1990904">
    <property type="term" value="C:ribonucleoprotein complex"/>
    <property type="evidence" value="ECO:0007669"/>
    <property type="project" value="UniProtKB-KW"/>
</dbReference>
<dbReference type="GO" id="GO:0005840">
    <property type="term" value="C:ribosome"/>
    <property type="evidence" value="ECO:0007669"/>
    <property type="project" value="UniProtKB-KW"/>
</dbReference>
<dbReference type="GO" id="GO:0019843">
    <property type="term" value="F:rRNA binding"/>
    <property type="evidence" value="ECO:0007669"/>
    <property type="project" value="UniProtKB-UniRule"/>
</dbReference>
<dbReference type="GO" id="GO:0003735">
    <property type="term" value="F:structural constituent of ribosome"/>
    <property type="evidence" value="ECO:0007669"/>
    <property type="project" value="InterPro"/>
</dbReference>
<dbReference type="GO" id="GO:0000049">
    <property type="term" value="F:tRNA binding"/>
    <property type="evidence" value="ECO:0007669"/>
    <property type="project" value="UniProtKB-UniRule"/>
</dbReference>
<dbReference type="GO" id="GO:0006412">
    <property type="term" value="P:translation"/>
    <property type="evidence" value="ECO:0007669"/>
    <property type="project" value="UniProtKB-UniRule"/>
</dbReference>
<dbReference type="FunFam" id="3.30.1440.10:FF:000001">
    <property type="entry name" value="50S ribosomal protein L5"/>
    <property type="match status" value="1"/>
</dbReference>
<dbReference type="Gene3D" id="3.30.1440.10">
    <property type="match status" value="1"/>
</dbReference>
<dbReference type="HAMAP" id="MF_01333_B">
    <property type="entry name" value="Ribosomal_uL5_B"/>
    <property type="match status" value="1"/>
</dbReference>
<dbReference type="InterPro" id="IPR002132">
    <property type="entry name" value="Ribosomal_uL5"/>
</dbReference>
<dbReference type="InterPro" id="IPR020930">
    <property type="entry name" value="Ribosomal_uL5_bac-type"/>
</dbReference>
<dbReference type="InterPro" id="IPR031309">
    <property type="entry name" value="Ribosomal_uL5_C"/>
</dbReference>
<dbReference type="InterPro" id="IPR020929">
    <property type="entry name" value="Ribosomal_uL5_CS"/>
</dbReference>
<dbReference type="InterPro" id="IPR022803">
    <property type="entry name" value="Ribosomal_uL5_dom_sf"/>
</dbReference>
<dbReference type="InterPro" id="IPR031310">
    <property type="entry name" value="Ribosomal_uL5_N"/>
</dbReference>
<dbReference type="NCBIfam" id="NF000585">
    <property type="entry name" value="PRK00010.1"/>
    <property type="match status" value="1"/>
</dbReference>
<dbReference type="PANTHER" id="PTHR11994">
    <property type="entry name" value="60S RIBOSOMAL PROTEIN L11-RELATED"/>
    <property type="match status" value="1"/>
</dbReference>
<dbReference type="Pfam" id="PF00281">
    <property type="entry name" value="Ribosomal_L5"/>
    <property type="match status" value="1"/>
</dbReference>
<dbReference type="Pfam" id="PF00673">
    <property type="entry name" value="Ribosomal_L5_C"/>
    <property type="match status" value="1"/>
</dbReference>
<dbReference type="PIRSF" id="PIRSF002161">
    <property type="entry name" value="Ribosomal_L5"/>
    <property type="match status" value="1"/>
</dbReference>
<dbReference type="SUPFAM" id="SSF55282">
    <property type="entry name" value="RL5-like"/>
    <property type="match status" value="1"/>
</dbReference>
<dbReference type="PROSITE" id="PS00358">
    <property type="entry name" value="RIBOSOMAL_L5"/>
    <property type="match status" value="1"/>
</dbReference>
<keyword id="KW-1185">Reference proteome</keyword>
<keyword id="KW-0687">Ribonucleoprotein</keyword>
<keyword id="KW-0689">Ribosomal protein</keyword>
<keyword id="KW-0694">RNA-binding</keyword>
<keyword id="KW-0699">rRNA-binding</keyword>
<keyword id="KW-0820">tRNA-binding</keyword>
<organism>
    <name type="scientific">Sphingopyxis alaskensis (strain DSM 13593 / LMG 18877 / RB2256)</name>
    <name type="common">Sphingomonas alaskensis</name>
    <dbReference type="NCBI Taxonomy" id="317655"/>
    <lineage>
        <taxon>Bacteria</taxon>
        <taxon>Pseudomonadati</taxon>
        <taxon>Pseudomonadota</taxon>
        <taxon>Alphaproteobacteria</taxon>
        <taxon>Sphingomonadales</taxon>
        <taxon>Sphingomonadaceae</taxon>
        <taxon>Sphingopyxis</taxon>
    </lineage>
</organism>
<protein>
    <recommendedName>
        <fullName evidence="1">Large ribosomal subunit protein uL5</fullName>
    </recommendedName>
    <alternativeName>
        <fullName evidence="2">50S ribosomal protein L5</fullName>
    </alternativeName>
</protein>